<keyword id="KW-0489">Methyltransferase</keyword>
<keyword id="KW-1185">Reference proteome</keyword>
<keyword id="KW-0949">S-adenosyl-L-methionine</keyword>
<keyword id="KW-0808">Transferase</keyword>
<comment type="function">
    <text evidence="1">Exhibits S-adenosyl-L-methionine-dependent methyltransferase activity.</text>
</comment>
<comment type="similarity">
    <text evidence="2">Belongs to the UPF0677 family.</text>
</comment>
<dbReference type="EC" id="2.1.1.-"/>
<dbReference type="EMBL" id="CP000480">
    <property type="protein sequence ID" value="ABK76063.1"/>
    <property type="molecule type" value="Genomic_DNA"/>
</dbReference>
<dbReference type="EMBL" id="CP001663">
    <property type="protein sequence ID" value="AFP37079.1"/>
    <property type="molecule type" value="Genomic_DNA"/>
</dbReference>
<dbReference type="RefSeq" id="WP_003892034.1">
    <property type="nucleotide sequence ID" value="NZ_SIJM01000009.1"/>
</dbReference>
<dbReference type="RefSeq" id="YP_885025.1">
    <property type="nucleotide sequence ID" value="NC_008596.1"/>
</dbReference>
<dbReference type="SMR" id="A0QQ37"/>
<dbReference type="STRING" id="246196.MSMEG_0614"/>
<dbReference type="PaxDb" id="246196-MSMEI_0598"/>
<dbReference type="KEGG" id="msb:LJ00_03050"/>
<dbReference type="KEGG" id="msg:MSMEI_0598"/>
<dbReference type="KEGG" id="msm:MSMEG_0614"/>
<dbReference type="PATRIC" id="fig|246196.19.peg.610"/>
<dbReference type="eggNOG" id="COG3315">
    <property type="taxonomic scope" value="Bacteria"/>
</dbReference>
<dbReference type="OrthoDB" id="9806164at2"/>
<dbReference type="Proteomes" id="UP000000757">
    <property type="component" value="Chromosome"/>
</dbReference>
<dbReference type="Proteomes" id="UP000006158">
    <property type="component" value="Chromosome"/>
</dbReference>
<dbReference type="GO" id="GO:0008168">
    <property type="term" value="F:methyltransferase activity"/>
    <property type="evidence" value="ECO:0007669"/>
    <property type="project" value="UniProtKB-KW"/>
</dbReference>
<dbReference type="GO" id="GO:0032259">
    <property type="term" value="P:methylation"/>
    <property type="evidence" value="ECO:0007669"/>
    <property type="project" value="UniProtKB-KW"/>
</dbReference>
<dbReference type="Gene3D" id="3.40.50.150">
    <property type="entry name" value="Vaccinia Virus protein VP39"/>
    <property type="match status" value="1"/>
</dbReference>
<dbReference type="InterPro" id="IPR007213">
    <property type="entry name" value="Ppm1/Ppm2/Tcmp"/>
</dbReference>
<dbReference type="InterPro" id="IPR029063">
    <property type="entry name" value="SAM-dependent_MTases_sf"/>
</dbReference>
<dbReference type="InterPro" id="IPR011610">
    <property type="entry name" value="SAM_mthyl_Trfase_ML2640-like"/>
</dbReference>
<dbReference type="NCBIfam" id="TIGR00027">
    <property type="entry name" value="mthyl_TIGR00027"/>
    <property type="match status" value="1"/>
</dbReference>
<dbReference type="PANTHER" id="PTHR43619">
    <property type="entry name" value="S-ADENOSYL-L-METHIONINE-DEPENDENT METHYLTRANSFERASE YKTD-RELATED"/>
    <property type="match status" value="1"/>
</dbReference>
<dbReference type="PANTHER" id="PTHR43619:SF2">
    <property type="entry name" value="S-ADENOSYL-L-METHIONINE-DEPENDENT METHYLTRANSFERASES SUPERFAMILY PROTEIN"/>
    <property type="match status" value="1"/>
</dbReference>
<dbReference type="Pfam" id="PF04072">
    <property type="entry name" value="LCM"/>
    <property type="match status" value="1"/>
</dbReference>
<dbReference type="SUPFAM" id="SSF53335">
    <property type="entry name" value="S-adenosyl-L-methionine-dependent methyltransferases"/>
    <property type="match status" value="1"/>
</dbReference>
<name>Y614_MYCS2</name>
<gene>
    <name type="ordered locus">MSMEG_0614</name>
    <name type="ordered locus">MSMEI_0598</name>
</gene>
<protein>
    <recommendedName>
        <fullName>Putative S-adenosyl-L-methionine-dependent methyltransferase MSMEG_0614/MSMEI_0598</fullName>
        <ecNumber>2.1.1.-</ecNumber>
    </recommendedName>
</protein>
<proteinExistence type="inferred from homology"/>
<accession>A0QQ37</accession>
<accession>I7G3L9</accession>
<evidence type="ECO:0000250" key="1"/>
<evidence type="ECO:0000305" key="2"/>
<reference key="1">
    <citation type="submission" date="2006-10" db="EMBL/GenBank/DDBJ databases">
        <authorList>
            <person name="Fleischmann R.D."/>
            <person name="Dodson R.J."/>
            <person name="Haft D.H."/>
            <person name="Merkel J.S."/>
            <person name="Nelson W.C."/>
            <person name="Fraser C.M."/>
        </authorList>
    </citation>
    <scope>NUCLEOTIDE SEQUENCE [LARGE SCALE GENOMIC DNA]</scope>
    <source>
        <strain>ATCC 700084 / mc(2)155</strain>
    </source>
</reference>
<reference key="2">
    <citation type="journal article" date="2007" name="Genome Biol.">
        <title>Interrupted coding sequences in Mycobacterium smegmatis: authentic mutations or sequencing errors?</title>
        <authorList>
            <person name="Deshayes C."/>
            <person name="Perrodou E."/>
            <person name="Gallien S."/>
            <person name="Euphrasie D."/>
            <person name="Schaeffer C."/>
            <person name="Van-Dorsselaer A."/>
            <person name="Poch O."/>
            <person name="Lecompte O."/>
            <person name="Reyrat J.-M."/>
        </authorList>
    </citation>
    <scope>NUCLEOTIDE SEQUENCE [LARGE SCALE GENOMIC DNA]</scope>
    <source>
        <strain>ATCC 700084 / mc(2)155</strain>
    </source>
</reference>
<reference key="3">
    <citation type="journal article" date="2009" name="Genome Res.">
        <title>Ortho-proteogenomics: multiple proteomes investigation through orthology and a new MS-based protocol.</title>
        <authorList>
            <person name="Gallien S."/>
            <person name="Perrodou E."/>
            <person name="Carapito C."/>
            <person name="Deshayes C."/>
            <person name="Reyrat J.-M."/>
            <person name="Van Dorsselaer A."/>
            <person name="Poch O."/>
            <person name="Schaeffer C."/>
            <person name="Lecompte O."/>
        </authorList>
    </citation>
    <scope>NUCLEOTIDE SEQUENCE [LARGE SCALE GENOMIC DNA]</scope>
    <source>
        <strain>ATCC 700084 / mc(2)155</strain>
    </source>
</reference>
<organism>
    <name type="scientific">Mycolicibacterium smegmatis (strain ATCC 700084 / mc(2)155)</name>
    <name type="common">Mycobacterium smegmatis</name>
    <dbReference type="NCBI Taxonomy" id="246196"/>
    <lineage>
        <taxon>Bacteria</taxon>
        <taxon>Bacillati</taxon>
        <taxon>Actinomycetota</taxon>
        <taxon>Actinomycetes</taxon>
        <taxon>Mycobacteriales</taxon>
        <taxon>Mycobacteriaceae</taxon>
        <taxon>Mycolicibacterium</taxon>
    </lineage>
</organism>
<sequence>MRTDNDQWDITISVGQTALFVAASRALEARKPHPLAVDHYAEVFCRAAGGDWVAAVEGTDPEHPLQTEFGVDFVNFQGARTKYFDDYFRRVADAGVRQVVLLAAGLDSRAYRLPWADGTVVYELDVPKVLEFKREVLRRHGATPTAERREVPVDLRDDWPAALRANGFDASQPSAWIAEGLLIYLPADAQELLFAGIDALSAPGSFVAIEESAPMPMDVFEVKRAEALASGDPNSFFALVFNEQCAPGEQWFSERGWTASTTTLNECLHEVGRPAPAPDSEAAQMTGSISLMWARKG</sequence>
<feature type="chain" id="PRO_0000361200" description="Putative S-adenosyl-L-methionine-dependent methyltransferase MSMEG_0614/MSMEI_0598">
    <location>
        <begin position="1"/>
        <end position="297"/>
    </location>
</feature>
<feature type="binding site" evidence="1">
    <location>
        <position position="125"/>
    </location>
    <ligand>
        <name>S-adenosyl-L-methionine</name>
        <dbReference type="ChEBI" id="CHEBI:59789"/>
    </ligand>
</feature>
<feature type="binding site" evidence="1">
    <location>
        <begin position="154"/>
        <end position="155"/>
    </location>
    <ligand>
        <name>S-adenosyl-L-methionine</name>
        <dbReference type="ChEBI" id="CHEBI:59789"/>
    </ligand>
</feature>